<name>SYC_RICPR</name>
<feature type="chain" id="PRO_0000159469" description="Cysteine--tRNA ligase">
    <location>
        <begin position="1"/>
        <end position="457"/>
    </location>
</feature>
<feature type="short sequence motif" description="'HIGH' region">
    <location>
        <begin position="31"/>
        <end position="41"/>
    </location>
</feature>
<feature type="short sequence motif" description="'KMSKS' region">
    <location>
        <begin position="272"/>
        <end position="276"/>
    </location>
</feature>
<feature type="binding site" evidence="1">
    <location>
        <position position="29"/>
    </location>
    <ligand>
        <name>Zn(2+)</name>
        <dbReference type="ChEBI" id="CHEBI:29105"/>
    </ligand>
</feature>
<feature type="binding site" evidence="1">
    <location>
        <position position="214"/>
    </location>
    <ligand>
        <name>Zn(2+)</name>
        <dbReference type="ChEBI" id="CHEBI:29105"/>
    </ligand>
</feature>
<feature type="binding site" evidence="1">
    <location>
        <position position="239"/>
    </location>
    <ligand>
        <name>Zn(2+)</name>
        <dbReference type="ChEBI" id="CHEBI:29105"/>
    </ligand>
</feature>
<feature type="binding site" evidence="1">
    <location>
        <position position="243"/>
    </location>
    <ligand>
        <name>Zn(2+)</name>
        <dbReference type="ChEBI" id="CHEBI:29105"/>
    </ligand>
</feature>
<feature type="binding site" evidence="1">
    <location>
        <position position="275"/>
    </location>
    <ligand>
        <name>ATP</name>
        <dbReference type="ChEBI" id="CHEBI:30616"/>
    </ligand>
</feature>
<evidence type="ECO:0000250" key="1"/>
<evidence type="ECO:0000305" key="2"/>
<organism>
    <name type="scientific">Rickettsia prowazekii (strain Madrid E)</name>
    <dbReference type="NCBI Taxonomy" id="272947"/>
    <lineage>
        <taxon>Bacteria</taxon>
        <taxon>Pseudomonadati</taxon>
        <taxon>Pseudomonadota</taxon>
        <taxon>Alphaproteobacteria</taxon>
        <taxon>Rickettsiales</taxon>
        <taxon>Rickettsiaceae</taxon>
        <taxon>Rickettsieae</taxon>
        <taxon>Rickettsia</taxon>
        <taxon>typhus group</taxon>
    </lineage>
</organism>
<sequence>MKLHLYNTLTRTKEVFNPQDPANIKMYVCGPTVYDNPHIGNSRSVVVYDLLYRIIIKIFGKKAVKYVRNITDVDDKIIDRAELLGITINDLTDKVTREFHINMEYLGCMLPTIEPKATEHIDVMIEIIERLIAKDHAYIADNHVYFDVLSAPNYTELSNRNLEAMFEGVRIENSKTKKNPQDFVLWKPAKKNEPENINFTSPWGLGRPGWHIECSAMSYKYLGQNFDIHGGGADLIFPHHTNEIAQSRCAFPSSTYAKYWIHNGFLTVNGSKMSKSLGNFITVRDLMDKQIQGEVVRLFLLSSHYRRPLDYNDKAIDDAKKTLDYWYRAIEHINVQKVDLPSNFMRSLFDDMNTPLAIKIINDYAKCVFISKTEAERKFNASAIITCANFIGLMRKTQYEWFNRDVDEFYINELINKRLKAKKQKNWLLADKIRNQLLEKKIILEDKSNYITIWRKE</sequence>
<keyword id="KW-0030">Aminoacyl-tRNA synthetase</keyword>
<keyword id="KW-0067">ATP-binding</keyword>
<keyword id="KW-0963">Cytoplasm</keyword>
<keyword id="KW-0436">Ligase</keyword>
<keyword id="KW-0479">Metal-binding</keyword>
<keyword id="KW-0547">Nucleotide-binding</keyword>
<keyword id="KW-0648">Protein biosynthesis</keyword>
<keyword id="KW-1185">Reference proteome</keyword>
<keyword id="KW-0862">Zinc</keyword>
<protein>
    <recommendedName>
        <fullName>Cysteine--tRNA ligase</fullName>
        <ecNumber>6.1.1.16</ecNumber>
    </recommendedName>
    <alternativeName>
        <fullName>Cysteinyl-tRNA synthetase</fullName>
        <shortName>CysRS</shortName>
    </alternativeName>
</protein>
<accession>Q9ZE62</accession>
<reference key="1">
    <citation type="journal article" date="1998" name="Nature">
        <title>The genome sequence of Rickettsia prowazekii and the origin of mitochondria.</title>
        <authorList>
            <person name="Andersson S.G.E."/>
            <person name="Zomorodipour A."/>
            <person name="Andersson J.O."/>
            <person name="Sicheritz-Ponten T."/>
            <person name="Alsmark U.C.M."/>
            <person name="Podowski R.M."/>
            <person name="Naeslund A.K."/>
            <person name="Eriksson A.-S."/>
            <person name="Winkler H.H."/>
            <person name="Kurland C.G."/>
        </authorList>
    </citation>
    <scope>NUCLEOTIDE SEQUENCE [LARGE SCALE GENOMIC DNA]</scope>
    <source>
        <strain>Madrid E</strain>
    </source>
</reference>
<gene>
    <name type="primary">cysS</name>
    <name type="ordered locus">RP085</name>
</gene>
<comment type="catalytic activity">
    <reaction>
        <text>tRNA(Cys) + L-cysteine + ATP = L-cysteinyl-tRNA(Cys) + AMP + diphosphate</text>
        <dbReference type="Rhea" id="RHEA:17773"/>
        <dbReference type="Rhea" id="RHEA-COMP:9661"/>
        <dbReference type="Rhea" id="RHEA-COMP:9679"/>
        <dbReference type="ChEBI" id="CHEBI:30616"/>
        <dbReference type="ChEBI" id="CHEBI:33019"/>
        <dbReference type="ChEBI" id="CHEBI:35235"/>
        <dbReference type="ChEBI" id="CHEBI:78442"/>
        <dbReference type="ChEBI" id="CHEBI:78517"/>
        <dbReference type="ChEBI" id="CHEBI:456215"/>
        <dbReference type="EC" id="6.1.1.16"/>
    </reaction>
</comment>
<comment type="cofactor">
    <cofactor evidence="1">
        <name>Zn(2+)</name>
        <dbReference type="ChEBI" id="CHEBI:29105"/>
    </cofactor>
    <text evidence="1">Binds 1 zinc ion per subunit.</text>
</comment>
<comment type="subunit">
    <text evidence="1">Monomer.</text>
</comment>
<comment type="subcellular location">
    <subcellularLocation>
        <location evidence="1">Cytoplasm</location>
    </subcellularLocation>
</comment>
<comment type="similarity">
    <text evidence="2">Belongs to the class-I aminoacyl-tRNA synthetase family.</text>
</comment>
<proteinExistence type="inferred from homology"/>
<dbReference type="EC" id="6.1.1.16"/>
<dbReference type="EMBL" id="AJ235270">
    <property type="protein sequence ID" value="CAA14555.1"/>
    <property type="molecule type" value="Genomic_DNA"/>
</dbReference>
<dbReference type="PIR" id="D71717">
    <property type="entry name" value="D71717"/>
</dbReference>
<dbReference type="RefSeq" id="NP_220478.1">
    <property type="nucleotide sequence ID" value="NC_000963.1"/>
</dbReference>
<dbReference type="RefSeq" id="WP_004599732.1">
    <property type="nucleotide sequence ID" value="NC_000963.1"/>
</dbReference>
<dbReference type="SMR" id="Q9ZE62"/>
<dbReference type="STRING" id="272947.gene:17555168"/>
<dbReference type="EnsemblBacteria" id="CAA14555">
    <property type="protein sequence ID" value="CAA14555"/>
    <property type="gene ID" value="CAA14555"/>
</dbReference>
<dbReference type="GeneID" id="57569212"/>
<dbReference type="KEGG" id="rpr:RP085"/>
<dbReference type="PATRIC" id="fig|272947.5.peg.85"/>
<dbReference type="eggNOG" id="COG0215">
    <property type="taxonomic scope" value="Bacteria"/>
</dbReference>
<dbReference type="HOGENOM" id="CLU_013528_0_1_5"/>
<dbReference type="OrthoDB" id="9815130at2"/>
<dbReference type="Proteomes" id="UP000002480">
    <property type="component" value="Chromosome"/>
</dbReference>
<dbReference type="GO" id="GO:0005829">
    <property type="term" value="C:cytosol"/>
    <property type="evidence" value="ECO:0007669"/>
    <property type="project" value="TreeGrafter"/>
</dbReference>
<dbReference type="GO" id="GO:0005524">
    <property type="term" value="F:ATP binding"/>
    <property type="evidence" value="ECO:0007669"/>
    <property type="project" value="UniProtKB-UniRule"/>
</dbReference>
<dbReference type="GO" id="GO:0004817">
    <property type="term" value="F:cysteine-tRNA ligase activity"/>
    <property type="evidence" value="ECO:0007669"/>
    <property type="project" value="UniProtKB-UniRule"/>
</dbReference>
<dbReference type="GO" id="GO:0008270">
    <property type="term" value="F:zinc ion binding"/>
    <property type="evidence" value="ECO:0007669"/>
    <property type="project" value="UniProtKB-UniRule"/>
</dbReference>
<dbReference type="GO" id="GO:0006423">
    <property type="term" value="P:cysteinyl-tRNA aminoacylation"/>
    <property type="evidence" value="ECO:0007669"/>
    <property type="project" value="UniProtKB-UniRule"/>
</dbReference>
<dbReference type="CDD" id="cd00672">
    <property type="entry name" value="CysRS_core"/>
    <property type="match status" value="1"/>
</dbReference>
<dbReference type="FunFam" id="3.40.50.620:FF:000068">
    <property type="entry name" value="Cysteine--tRNA ligase"/>
    <property type="match status" value="1"/>
</dbReference>
<dbReference type="Gene3D" id="1.20.120.1910">
    <property type="entry name" value="Cysteine-tRNA ligase, C-terminal anti-codon recognition domain"/>
    <property type="match status" value="1"/>
</dbReference>
<dbReference type="Gene3D" id="3.40.50.620">
    <property type="entry name" value="HUPs"/>
    <property type="match status" value="1"/>
</dbReference>
<dbReference type="HAMAP" id="MF_00041">
    <property type="entry name" value="Cys_tRNA_synth"/>
    <property type="match status" value="1"/>
</dbReference>
<dbReference type="InterPro" id="IPR015803">
    <property type="entry name" value="Cys-tRNA-ligase"/>
</dbReference>
<dbReference type="InterPro" id="IPR015273">
    <property type="entry name" value="Cys-tRNA-synt_Ia_DALR"/>
</dbReference>
<dbReference type="InterPro" id="IPR024909">
    <property type="entry name" value="Cys-tRNA/MSH_ligase"/>
</dbReference>
<dbReference type="InterPro" id="IPR014729">
    <property type="entry name" value="Rossmann-like_a/b/a_fold"/>
</dbReference>
<dbReference type="InterPro" id="IPR032678">
    <property type="entry name" value="tRNA-synt_1_cat_dom"/>
</dbReference>
<dbReference type="InterPro" id="IPR009080">
    <property type="entry name" value="tRNAsynth_Ia_anticodon-bd"/>
</dbReference>
<dbReference type="NCBIfam" id="TIGR00435">
    <property type="entry name" value="cysS"/>
    <property type="match status" value="1"/>
</dbReference>
<dbReference type="PANTHER" id="PTHR10890:SF3">
    <property type="entry name" value="CYSTEINE--TRNA LIGASE, CYTOPLASMIC"/>
    <property type="match status" value="1"/>
</dbReference>
<dbReference type="PANTHER" id="PTHR10890">
    <property type="entry name" value="CYSTEINYL-TRNA SYNTHETASE"/>
    <property type="match status" value="1"/>
</dbReference>
<dbReference type="Pfam" id="PF01406">
    <property type="entry name" value="tRNA-synt_1e"/>
    <property type="match status" value="1"/>
</dbReference>
<dbReference type="PRINTS" id="PR00983">
    <property type="entry name" value="TRNASYNTHCYS"/>
</dbReference>
<dbReference type="SMART" id="SM00840">
    <property type="entry name" value="DALR_2"/>
    <property type="match status" value="1"/>
</dbReference>
<dbReference type="SUPFAM" id="SSF47323">
    <property type="entry name" value="Anticodon-binding domain of a subclass of class I aminoacyl-tRNA synthetases"/>
    <property type="match status" value="1"/>
</dbReference>
<dbReference type="SUPFAM" id="SSF52374">
    <property type="entry name" value="Nucleotidylyl transferase"/>
    <property type="match status" value="1"/>
</dbReference>